<name>RUVB2_NEUCR</name>
<accession>Q873C7</accession>
<accession>Q1K8K1</accession>
<dbReference type="EC" id="3.6.4.12"/>
<dbReference type="EMBL" id="BX284750">
    <property type="protein sequence ID" value="CAD70382.1"/>
    <property type="molecule type" value="Genomic_DNA"/>
</dbReference>
<dbReference type="EMBL" id="CM002237">
    <property type="protein sequence ID" value="EAA34092.1"/>
    <property type="molecule type" value="Genomic_DNA"/>
</dbReference>
<dbReference type="RefSeq" id="XP_963328.1">
    <property type="nucleotide sequence ID" value="XM_958235.2"/>
</dbReference>
<dbReference type="SMR" id="Q873C7"/>
<dbReference type="FunCoup" id="Q873C7">
    <property type="interactions" value="1373"/>
</dbReference>
<dbReference type="STRING" id="367110.Q873C7"/>
<dbReference type="PaxDb" id="5141-EFNCRP00000006818"/>
<dbReference type="EnsemblFungi" id="EAA34092">
    <property type="protein sequence ID" value="EAA34092"/>
    <property type="gene ID" value="NCU06854"/>
</dbReference>
<dbReference type="GeneID" id="3879477"/>
<dbReference type="KEGG" id="ncr:NCU06854"/>
<dbReference type="VEuPathDB" id="FungiDB:NCU06854"/>
<dbReference type="HOGENOM" id="CLU_028311_4_0_1"/>
<dbReference type="InParanoid" id="Q873C7"/>
<dbReference type="OMA" id="IINTEPY"/>
<dbReference type="OrthoDB" id="10060499at2759"/>
<dbReference type="Proteomes" id="UP000001805">
    <property type="component" value="Chromosome 6, Linkage Group II"/>
</dbReference>
<dbReference type="GO" id="GO:0031011">
    <property type="term" value="C:Ino80 complex"/>
    <property type="evidence" value="ECO:0000318"/>
    <property type="project" value="GO_Central"/>
</dbReference>
<dbReference type="GO" id="GO:0035267">
    <property type="term" value="C:NuA4 histone acetyltransferase complex"/>
    <property type="evidence" value="ECO:0000318"/>
    <property type="project" value="GO_Central"/>
</dbReference>
<dbReference type="GO" id="GO:0097255">
    <property type="term" value="C:R2TP complex"/>
    <property type="evidence" value="ECO:0000318"/>
    <property type="project" value="GO_Central"/>
</dbReference>
<dbReference type="GO" id="GO:0000812">
    <property type="term" value="C:Swr1 complex"/>
    <property type="evidence" value="ECO:0000318"/>
    <property type="project" value="GO_Central"/>
</dbReference>
<dbReference type="GO" id="GO:0043138">
    <property type="term" value="F:3'-5' DNA helicase activity"/>
    <property type="evidence" value="ECO:0007669"/>
    <property type="project" value="EnsemblFungi"/>
</dbReference>
<dbReference type="GO" id="GO:0043139">
    <property type="term" value="F:5'-3' DNA helicase activity"/>
    <property type="evidence" value="ECO:0007669"/>
    <property type="project" value="EnsemblFungi"/>
</dbReference>
<dbReference type="GO" id="GO:0005524">
    <property type="term" value="F:ATP binding"/>
    <property type="evidence" value="ECO:0007669"/>
    <property type="project" value="UniProtKB-KW"/>
</dbReference>
<dbReference type="GO" id="GO:0016887">
    <property type="term" value="F:ATP hydrolysis activity"/>
    <property type="evidence" value="ECO:0007669"/>
    <property type="project" value="InterPro"/>
</dbReference>
<dbReference type="GO" id="GO:0003678">
    <property type="term" value="F:DNA helicase activity"/>
    <property type="evidence" value="ECO:0000318"/>
    <property type="project" value="GO_Central"/>
</dbReference>
<dbReference type="GO" id="GO:0000492">
    <property type="term" value="P:box C/D snoRNP assembly"/>
    <property type="evidence" value="ECO:0000318"/>
    <property type="project" value="GO_Central"/>
</dbReference>
<dbReference type="GO" id="GO:0006338">
    <property type="term" value="P:chromatin remodeling"/>
    <property type="evidence" value="ECO:0000318"/>
    <property type="project" value="GO_Central"/>
</dbReference>
<dbReference type="GO" id="GO:0006281">
    <property type="term" value="P:DNA repair"/>
    <property type="evidence" value="ECO:0007669"/>
    <property type="project" value="UniProtKB-KW"/>
</dbReference>
<dbReference type="GO" id="GO:0006357">
    <property type="term" value="P:regulation of transcription by RNA polymerase II"/>
    <property type="evidence" value="ECO:0000318"/>
    <property type="project" value="GO_Central"/>
</dbReference>
<dbReference type="GO" id="GO:0006364">
    <property type="term" value="P:rRNA processing"/>
    <property type="evidence" value="ECO:0007669"/>
    <property type="project" value="UniProtKB-KW"/>
</dbReference>
<dbReference type="FunFam" id="3.40.50.300:FF:002221">
    <property type="entry name" value="RuvB-like 2"/>
    <property type="match status" value="2"/>
</dbReference>
<dbReference type="FunFam" id="1.10.8.60:FF:000010">
    <property type="entry name" value="RuvB-like helicase"/>
    <property type="match status" value="1"/>
</dbReference>
<dbReference type="FunFam" id="2.40.50.360:FF:000002">
    <property type="entry name" value="RuvB-like helicase"/>
    <property type="match status" value="1"/>
</dbReference>
<dbReference type="Gene3D" id="1.10.8.60">
    <property type="match status" value="1"/>
</dbReference>
<dbReference type="Gene3D" id="3.40.50.300">
    <property type="entry name" value="P-loop containing nucleotide triphosphate hydrolases"/>
    <property type="match status" value="1"/>
</dbReference>
<dbReference type="Gene3D" id="2.40.50.360">
    <property type="entry name" value="RuvB-like helicase, domain II"/>
    <property type="match status" value="1"/>
</dbReference>
<dbReference type="InterPro" id="IPR003593">
    <property type="entry name" value="AAA+_ATPase"/>
</dbReference>
<dbReference type="InterPro" id="IPR027417">
    <property type="entry name" value="P-loop_NTPase"/>
</dbReference>
<dbReference type="InterPro" id="IPR027238">
    <property type="entry name" value="RuvB-like"/>
</dbReference>
<dbReference type="InterPro" id="IPR041048">
    <property type="entry name" value="RuvB-like_C"/>
</dbReference>
<dbReference type="InterPro" id="IPR042487">
    <property type="entry name" value="RuvBL1/2_DNA/RNA_bd_dom"/>
</dbReference>
<dbReference type="InterPro" id="IPR010339">
    <property type="entry name" value="TIP49_P-loop"/>
</dbReference>
<dbReference type="PANTHER" id="PTHR11093">
    <property type="entry name" value="RUVB-RELATED REPTIN AND PONTIN"/>
    <property type="match status" value="1"/>
</dbReference>
<dbReference type="Pfam" id="PF06068">
    <property type="entry name" value="TIP49"/>
    <property type="match status" value="1"/>
</dbReference>
<dbReference type="Pfam" id="PF17856">
    <property type="entry name" value="TIP49_C"/>
    <property type="match status" value="1"/>
</dbReference>
<dbReference type="PRINTS" id="PR00830">
    <property type="entry name" value="ENDOLAPTASE"/>
</dbReference>
<dbReference type="SMART" id="SM00382">
    <property type="entry name" value="AAA"/>
    <property type="match status" value="1"/>
</dbReference>
<dbReference type="SUPFAM" id="SSF52540">
    <property type="entry name" value="P-loop containing nucleoside triphosphate hydrolases"/>
    <property type="match status" value="1"/>
</dbReference>
<organism>
    <name type="scientific">Neurospora crassa (strain ATCC 24698 / 74-OR23-1A / CBS 708.71 / DSM 1257 / FGSC 987)</name>
    <dbReference type="NCBI Taxonomy" id="367110"/>
    <lineage>
        <taxon>Eukaryota</taxon>
        <taxon>Fungi</taxon>
        <taxon>Dikarya</taxon>
        <taxon>Ascomycota</taxon>
        <taxon>Pezizomycotina</taxon>
        <taxon>Sordariomycetes</taxon>
        <taxon>Sordariomycetidae</taxon>
        <taxon>Sordariales</taxon>
        <taxon>Sordariaceae</taxon>
        <taxon>Neurospora</taxon>
    </lineage>
</organism>
<reference key="1">
    <citation type="journal article" date="2003" name="Nucleic Acids Res.">
        <title>What's in the genome of a filamentous fungus? Analysis of the Neurospora genome sequence.</title>
        <authorList>
            <person name="Mannhaupt G."/>
            <person name="Montrone C."/>
            <person name="Haase D."/>
            <person name="Mewes H.-W."/>
            <person name="Aign V."/>
            <person name="Hoheisel J.D."/>
            <person name="Fartmann B."/>
            <person name="Nyakatura G."/>
            <person name="Kempken F."/>
            <person name="Maier J."/>
            <person name="Schulte U."/>
        </authorList>
    </citation>
    <scope>NUCLEOTIDE SEQUENCE [LARGE SCALE GENOMIC DNA]</scope>
    <source>
        <strain>ATCC 24698 / 74-OR23-1A / CBS 708.71 / DSM 1257 / FGSC 987</strain>
    </source>
</reference>
<reference key="2">
    <citation type="journal article" date="2003" name="Nature">
        <title>The genome sequence of the filamentous fungus Neurospora crassa.</title>
        <authorList>
            <person name="Galagan J.E."/>
            <person name="Calvo S.E."/>
            <person name="Borkovich K.A."/>
            <person name="Selker E.U."/>
            <person name="Read N.D."/>
            <person name="Jaffe D.B."/>
            <person name="FitzHugh W."/>
            <person name="Ma L.-J."/>
            <person name="Smirnov S."/>
            <person name="Purcell S."/>
            <person name="Rehman B."/>
            <person name="Elkins T."/>
            <person name="Engels R."/>
            <person name="Wang S."/>
            <person name="Nielsen C.B."/>
            <person name="Butler J."/>
            <person name="Endrizzi M."/>
            <person name="Qui D."/>
            <person name="Ianakiev P."/>
            <person name="Bell-Pedersen D."/>
            <person name="Nelson M.A."/>
            <person name="Werner-Washburne M."/>
            <person name="Selitrennikoff C.P."/>
            <person name="Kinsey J.A."/>
            <person name="Braun E.L."/>
            <person name="Zelter A."/>
            <person name="Schulte U."/>
            <person name="Kothe G.O."/>
            <person name="Jedd G."/>
            <person name="Mewes H.-W."/>
            <person name="Staben C."/>
            <person name="Marcotte E."/>
            <person name="Greenberg D."/>
            <person name="Roy A."/>
            <person name="Foley K."/>
            <person name="Naylor J."/>
            <person name="Stange-Thomann N."/>
            <person name="Barrett R."/>
            <person name="Gnerre S."/>
            <person name="Kamal M."/>
            <person name="Kamvysselis M."/>
            <person name="Mauceli E.W."/>
            <person name="Bielke C."/>
            <person name="Rudd S."/>
            <person name="Frishman D."/>
            <person name="Krystofova S."/>
            <person name="Rasmussen C."/>
            <person name="Metzenberg R.L."/>
            <person name="Perkins D.D."/>
            <person name="Kroken S."/>
            <person name="Cogoni C."/>
            <person name="Macino G."/>
            <person name="Catcheside D.E.A."/>
            <person name="Li W."/>
            <person name="Pratt R.J."/>
            <person name="Osmani S.A."/>
            <person name="DeSouza C.P.C."/>
            <person name="Glass N.L."/>
            <person name="Orbach M.J."/>
            <person name="Berglund J.A."/>
            <person name="Voelker R."/>
            <person name="Yarden O."/>
            <person name="Plamann M."/>
            <person name="Seiler S."/>
            <person name="Dunlap J.C."/>
            <person name="Radford A."/>
            <person name="Aramayo R."/>
            <person name="Natvig D.O."/>
            <person name="Alex L.A."/>
            <person name="Mannhaupt G."/>
            <person name="Ebbole D.J."/>
            <person name="Freitag M."/>
            <person name="Paulsen I."/>
            <person name="Sachs M.S."/>
            <person name="Lander E.S."/>
            <person name="Nusbaum C."/>
            <person name="Birren B.W."/>
        </authorList>
    </citation>
    <scope>NUCLEOTIDE SEQUENCE [LARGE SCALE GENOMIC DNA]</scope>
    <source>
        <strain>ATCC 24698 / 74-OR23-1A / CBS 708.71 / DSM 1257 / FGSC 987</strain>
    </source>
</reference>
<protein>
    <recommendedName>
        <fullName>RuvB-like helicase 2</fullName>
        <ecNumber>3.6.4.12</ecNumber>
    </recommendedName>
</protein>
<gene>
    <name type="primary">hel-2</name>
    <name type="synonym">rvb2</name>
    <name type="ORF">B17B1.150</name>
    <name type="ORF">NCU06854</name>
</gene>
<sequence length="481" mass="52244">MAAQVVTVGESKDLRGLNLIAAHSHIRGLGVDADTLEPRVASQGLVGQEKARKAAAVVLEMIKQGKIAGRAVLIAGPPSTGKTALAMGMAQSLGTDVPFTTLAASEIYSLEMSKTEALTQAFRKSIGVRIKEESEIMEGEVVEIQIDRSVTGHAKQGKLTIKTTDMEAIYDMGSKMIDAMTKERVMAGDIISIDKSSGKITKLGRSYARSRDYDAMGVDTKFLQCPDGELQKRKEVVHTVTLHEIDVINSRTQGFLALFSGDTGEIRSEIRDQINTKVAEWKEEGKAEIVPGVLFIDEVHMLDIECFSYINRALESDLAPIVIMASNRGHSKIRGTDYKSPHGLPLDFLDRISIINTHSYTPDELRQILTIRAQEEEVDLTPDALALLTKIGAEAGLRYASNLITTSQLICAKRKAKQVGVEDVQRSFKLFYDPARSVKFVQESEKRLIGSDGVVDFRVNGGATGEPAATAAGGDSMDTSS</sequence>
<comment type="function">
    <text evidence="1">DNA helicase which participates in several chromatin remodeling complexes, including the SWR1 and the INO80 complexes. The SWR1 complex mediates the ATP-dependent exchange of histone H2A for the H2A variant H2A.Z leading to transcriptional regulation of selected genes by chromatin remodeling. The INO80 complex remodels chromatin by shifting nucleosomes and is involved in DNA repair. Also involved in pre-rRNA processing (By similarity).</text>
</comment>
<comment type="catalytic activity">
    <reaction>
        <text>ATP + H2O = ADP + phosphate + H(+)</text>
        <dbReference type="Rhea" id="RHEA:13065"/>
        <dbReference type="ChEBI" id="CHEBI:15377"/>
        <dbReference type="ChEBI" id="CHEBI:15378"/>
        <dbReference type="ChEBI" id="CHEBI:30616"/>
        <dbReference type="ChEBI" id="CHEBI:43474"/>
        <dbReference type="ChEBI" id="CHEBI:456216"/>
        <dbReference type="EC" id="3.6.4.12"/>
    </reaction>
</comment>
<comment type="subunit">
    <text evidence="1">May form heterododecamers with hel-1/rvb1. Component of the SWR1 chromatin remodeling complex, the INO80 chromatin remodeling complex, and of the R2TP complex (By similarity).</text>
</comment>
<comment type="subcellular location">
    <subcellularLocation>
        <location evidence="1">Nucleus</location>
    </subcellularLocation>
</comment>
<comment type="similarity">
    <text evidence="2">Belongs to the RuvB family.</text>
</comment>
<proteinExistence type="inferred from homology"/>
<evidence type="ECO:0000250" key="1"/>
<evidence type="ECO:0000305" key="2"/>
<keyword id="KW-0010">Activator</keyword>
<keyword id="KW-0067">ATP-binding</keyword>
<keyword id="KW-0156">Chromatin regulator</keyword>
<keyword id="KW-0227">DNA damage</keyword>
<keyword id="KW-0234">DNA repair</keyword>
<keyword id="KW-0347">Helicase</keyword>
<keyword id="KW-0378">Hydrolase</keyword>
<keyword id="KW-0547">Nucleotide-binding</keyword>
<keyword id="KW-0539">Nucleus</keyword>
<keyword id="KW-1185">Reference proteome</keyword>
<keyword id="KW-0698">rRNA processing</keyword>
<keyword id="KW-0804">Transcription</keyword>
<keyword id="KW-0805">Transcription regulation</keyword>
<feature type="chain" id="PRO_0000165671" description="RuvB-like helicase 2">
    <location>
        <begin position="1"/>
        <end position="481"/>
    </location>
</feature>
<feature type="binding site" evidence="1">
    <location>
        <begin position="76"/>
        <end position="83"/>
    </location>
    <ligand>
        <name>ATP</name>
        <dbReference type="ChEBI" id="CHEBI:30616"/>
    </ligand>
</feature>